<proteinExistence type="evidence at protein level"/>
<reference key="1">
    <citation type="journal article" date="2004" name="Nature">
        <title>DNA sequence and analysis of human chromosome 9.</title>
        <authorList>
            <person name="Humphray S.J."/>
            <person name="Oliver K."/>
            <person name="Hunt A.R."/>
            <person name="Plumb R.W."/>
            <person name="Loveland J.E."/>
            <person name="Howe K.L."/>
            <person name="Andrews T.D."/>
            <person name="Searle S."/>
            <person name="Hunt S.E."/>
            <person name="Scott C.E."/>
            <person name="Jones M.C."/>
            <person name="Ainscough R."/>
            <person name="Almeida J.P."/>
            <person name="Ambrose K.D."/>
            <person name="Ashwell R.I.S."/>
            <person name="Babbage A.K."/>
            <person name="Babbage S."/>
            <person name="Bagguley C.L."/>
            <person name="Bailey J."/>
            <person name="Banerjee R."/>
            <person name="Barker D.J."/>
            <person name="Barlow K.F."/>
            <person name="Bates K."/>
            <person name="Beasley H."/>
            <person name="Beasley O."/>
            <person name="Bird C.P."/>
            <person name="Bray-Allen S."/>
            <person name="Brown A.J."/>
            <person name="Brown J.Y."/>
            <person name="Burford D."/>
            <person name="Burrill W."/>
            <person name="Burton J."/>
            <person name="Carder C."/>
            <person name="Carter N.P."/>
            <person name="Chapman J.C."/>
            <person name="Chen Y."/>
            <person name="Clarke G."/>
            <person name="Clark S.Y."/>
            <person name="Clee C.M."/>
            <person name="Clegg S."/>
            <person name="Collier R.E."/>
            <person name="Corby N."/>
            <person name="Crosier M."/>
            <person name="Cummings A.T."/>
            <person name="Davies J."/>
            <person name="Dhami P."/>
            <person name="Dunn M."/>
            <person name="Dutta I."/>
            <person name="Dyer L.W."/>
            <person name="Earthrowl M.E."/>
            <person name="Faulkner L."/>
            <person name="Fleming C.J."/>
            <person name="Frankish A."/>
            <person name="Frankland J.A."/>
            <person name="French L."/>
            <person name="Fricker D.G."/>
            <person name="Garner P."/>
            <person name="Garnett J."/>
            <person name="Ghori J."/>
            <person name="Gilbert J.G.R."/>
            <person name="Glison C."/>
            <person name="Grafham D.V."/>
            <person name="Gribble S."/>
            <person name="Griffiths C."/>
            <person name="Griffiths-Jones S."/>
            <person name="Grocock R."/>
            <person name="Guy J."/>
            <person name="Hall R.E."/>
            <person name="Hammond S."/>
            <person name="Harley J.L."/>
            <person name="Harrison E.S.I."/>
            <person name="Hart E.A."/>
            <person name="Heath P.D."/>
            <person name="Henderson C.D."/>
            <person name="Hopkins B.L."/>
            <person name="Howard P.J."/>
            <person name="Howden P.J."/>
            <person name="Huckle E."/>
            <person name="Johnson C."/>
            <person name="Johnson D."/>
            <person name="Joy A.A."/>
            <person name="Kay M."/>
            <person name="Keenan S."/>
            <person name="Kershaw J.K."/>
            <person name="Kimberley A.M."/>
            <person name="King A."/>
            <person name="Knights A."/>
            <person name="Laird G.K."/>
            <person name="Langford C."/>
            <person name="Lawlor S."/>
            <person name="Leongamornlert D.A."/>
            <person name="Leversha M."/>
            <person name="Lloyd C."/>
            <person name="Lloyd D.M."/>
            <person name="Lovell J."/>
            <person name="Martin S."/>
            <person name="Mashreghi-Mohammadi M."/>
            <person name="Matthews L."/>
            <person name="McLaren S."/>
            <person name="McLay K.E."/>
            <person name="McMurray A."/>
            <person name="Milne S."/>
            <person name="Nickerson T."/>
            <person name="Nisbett J."/>
            <person name="Nordsiek G."/>
            <person name="Pearce A.V."/>
            <person name="Peck A.I."/>
            <person name="Porter K.M."/>
            <person name="Pandian R."/>
            <person name="Pelan S."/>
            <person name="Phillimore B."/>
            <person name="Povey S."/>
            <person name="Ramsey Y."/>
            <person name="Rand V."/>
            <person name="Scharfe M."/>
            <person name="Sehra H.K."/>
            <person name="Shownkeen R."/>
            <person name="Sims S.K."/>
            <person name="Skuce C.D."/>
            <person name="Smith M."/>
            <person name="Steward C.A."/>
            <person name="Swarbreck D."/>
            <person name="Sycamore N."/>
            <person name="Tester J."/>
            <person name="Thorpe A."/>
            <person name="Tracey A."/>
            <person name="Tromans A."/>
            <person name="Thomas D.W."/>
            <person name="Wall M."/>
            <person name="Wallis J.M."/>
            <person name="West A.P."/>
            <person name="Whitehead S.L."/>
            <person name="Willey D.L."/>
            <person name="Williams S.A."/>
            <person name="Wilming L."/>
            <person name="Wray P.W."/>
            <person name="Young L."/>
            <person name="Ashurst J.L."/>
            <person name="Coulson A."/>
            <person name="Blocker H."/>
            <person name="Durbin R.M."/>
            <person name="Sulston J.E."/>
            <person name="Hubbard T."/>
            <person name="Jackson M.J."/>
            <person name="Bentley D.R."/>
            <person name="Beck S."/>
            <person name="Rogers J."/>
            <person name="Dunham I."/>
        </authorList>
    </citation>
    <scope>NUCLEOTIDE SEQUENCE [LARGE SCALE GENOMIC DNA]</scope>
</reference>
<organism>
    <name type="scientific">Homo sapiens</name>
    <name type="common">Human</name>
    <dbReference type="NCBI Taxonomy" id="9606"/>
    <lineage>
        <taxon>Eukaryota</taxon>
        <taxon>Metazoa</taxon>
        <taxon>Chordata</taxon>
        <taxon>Craniata</taxon>
        <taxon>Vertebrata</taxon>
        <taxon>Euteleostomi</taxon>
        <taxon>Mammalia</taxon>
        <taxon>Eutheria</taxon>
        <taxon>Euarchontoglires</taxon>
        <taxon>Primates</taxon>
        <taxon>Haplorrhini</taxon>
        <taxon>Catarrhini</taxon>
        <taxon>Hominidae</taxon>
        <taxon>Homo</taxon>
    </lineage>
</organism>
<comment type="subcellular location">
    <subcellularLocation>
        <location evidence="4">Membrane</location>
        <topology evidence="4">Single-pass membrane protein</topology>
    </subcellularLocation>
</comment>
<comment type="similarity">
    <text evidence="4">Belongs to the SPATA31 family.</text>
</comment>
<protein>
    <recommendedName>
        <fullName>Protein SPATA31F3</fullName>
    </recommendedName>
    <alternativeName>
        <fullName evidence="4">Protein FAM205C</fullName>
    </alternativeName>
</protein>
<keyword id="KW-0472">Membrane</keyword>
<keyword id="KW-0597">Phosphoprotein</keyword>
<keyword id="KW-1267">Proteomics identification</keyword>
<keyword id="KW-1185">Reference proteome</keyword>
<keyword id="KW-0812">Transmembrane</keyword>
<keyword id="KW-1133">Transmembrane helix</keyword>
<sequence length="338" mass="37613">MLSPTFVLWDVGYPLYTYGSICIIALIIWQVKKSCQKLSLVPNRSCCRCHRRVQQKSGDRTSRARRTSQEEAEKLWKLLFLMKSQGWLPQEGSVRRILCADPCCQICNVMALEIKQLLAGENNQISLTSLGPSQGSSCLEALSTSSVSFKHSQDLGSPKSKELSLASVTPTLSQLMDQKSLTQSAARSAGADSVQDSWADHFQRGQRSQVPAVSQVMGSLSSNFEKPGIPLSQQERTKNNSKFVLENQEAPEVGLDNKMKLFLHWINPEMKDRRHEESILLSKAETVTQDRTKNIEKSPTVTKDHVWGATTQKTTEDPEAQPPSTEEEGLIFCDAPSA</sequence>
<feature type="chain" id="PRO_0000319052" description="Protein SPATA31F3">
    <location>
        <begin position="1"/>
        <end position="338"/>
    </location>
</feature>
<feature type="transmembrane region" description="Helical" evidence="2">
    <location>
        <begin position="7"/>
        <end position="29"/>
    </location>
</feature>
<feature type="region of interest" description="Disordered" evidence="3">
    <location>
        <begin position="290"/>
        <end position="338"/>
    </location>
</feature>
<feature type="compositionally biased region" description="Basic and acidic residues" evidence="3">
    <location>
        <begin position="290"/>
        <end position="306"/>
    </location>
</feature>
<feature type="modified residue" description="Phosphoserine" evidence="1">
    <location>
        <position position="152"/>
    </location>
</feature>
<name>S31F3_HUMAN</name>
<gene>
    <name evidence="5" type="primary">SPATA31F3</name>
    <name type="synonym">FAM205C</name>
    <name evidence="5" type="synonym">FAM205CP</name>
</gene>
<accession>A6NFA0</accession>
<evidence type="ECO:0000250" key="1">
    <source>
        <dbReference type="UniProtKB" id="Q642A3"/>
    </source>
</evidence>
<evidence type="ECO:0000255" key="2"/>
<evidence type="ECO:0000256" key="3">
    <source>
        <dbReference type="SAM" id="MobiDB-lite"/>
    </source>
</evidence>
<evidence type="ECO:0000305" key="4"/>
<evidence type="ECO:0000312" key="5">
    <source>
        <dbReference type="HGNC" id="HGNC:42673"/>
    </source>
</evidence>
<dbReference type="EMBL" id="AL355377">
    <property type="status" value="NOT_ANNOTATED_CDS"/>
    <property type="molecule type" value="Genomic_DNA"/>
</dbReference>
<dbReference type="CCDS" id="CCDS83358.1"/>
<dbReference type="RefSeq" id="NP_001296355.1">
    <property type="nucleotide sequence ID" value="NM_001309426.2"/>
</dbReference>
<dbReference type="SMR" id="A6NFA0"/>
<dbReference type="iPTMnet" id="A6NFA0"/>
<dbReference type="PhosphoSitePlus" id="A6NFA0"/>
<dbReference type="BioMuta" id="FAM205C"/>
<dbReference type="jPOST" id="A6NFA0"/>
<dbReference type="MassIVE" id="A6NFA0"/>
<dbReference type="PeptideAtlas" id="A6NFA0"/>
<dbReference type="DNASU" id="100129969"/>
<dbReference type="Ensembl" id="ENST00000603640.6">
    <property type="protein sequence ID" value="ENSP00000489585.1"/>
    <property type="gene ID" value="ENSG00000187791.13"/>
</dbReference>
<dbReference type="GeneID" id="100129969"/>
<dbReference type="KEGG" id="hsa:100129969"/>
<dbReference type="AGR" id="HGNC:42673"/>
<dbReference type="CTD" id="100129969"/>
<dbReference type="DisGeNET" id="100129969"/>
<dbReference type="GeneCards" id="SPATA31F3"/>
<dbReference type="HGNC" id="HGNC:42673">
    <property type="gene designation" value="SPATA31F3"/>
</dbReference>
<dbReference type="HPA" id="ENSG00000187791">
    <property type="expression patterns" value="Tissue enriched (testis)"/>
</dbReference>
<dbReference type="neXtProt" id="NX_A6NFA0"/>
<dbReference type="OpenTargets" id="ENSG00000187791"/>
<dbReference type="VEuPathDB" id="HostDB:ENSG00000187791"/>
<dbReference type="GeneTree" id="ENSGT00950000183043"/>
<dbReference type="InParanoid" id="A6NFA0"/>
<dbReference type="OMA" id="FSHWINP"/>
<dbReference type="PAN-GO" id="A6NFA0">
    <property type="GO annotations" value="0 GO annotations based on evolutionary models"/>
</dbReference>
<dbReference type="PhylomeDB" id="A6NFA0"/>
<dbReference type="BioGRID-ORCS" id="100129969">
    <property type="hits" value="0 hits in 17 CRISPR screens"/>
</dbReference>
<dbReference type="Pharos" id="A6NFA0">
    <property type="development level" value="Tdark"/>
</dbReference>
<dbReference type="PRO" id="PR:A6NFA0"/>
<dbReference type="Proteomes" id="UP000005640">
    <property type="component" value="Chromosome 9"/>
</dbReference>
<dbReference type="RNAct" id="A6NFA0">
    <property type="molecule type" value="protein"/>
</dbReference>
<dbReference type="Bgee" id="ENSG00000187791">
    <property type="expression patterns" value="Expressed in sperm and 55 other cell types or tissues"/>
</dbReference>
<dbReference type="ExpressionAtlas" id="A6NFA0">
    <property type="expression patterns" value="baseline and differential"/>
</dbReference>
<dbReference type="GO" id="GO:0016020">
    <property type="term" value="C:membrane"/>
    <property type="evidence" value="ECO:0007669"/>
    <property type="project" value="UniProtKB-SubCell"/>
</dbReference>
<dbReference type="InterPro" id="IPR027970">
    <property type="entry name" value="SPATA31F3-like"/>
</dbReference>
<dbReference type="PANTHER" id="PTHR21859">
    <property type="entry name" value="ACROSOME-SPECIFIC PROTEIN"/>
    <property type="match status" value="1"/>
</dbReference>
<dbReference type="PANTHER" id="PTHR21859:SF15">
    <property type="entry name" value="PROTEIN SPATA31F1-RELATED"/>
    <property type="match status" value="1"/>
</dbReference>
<dbReference type="Pfam" id="PF15371">
    <property type="entry name" value="DUF4599"/>
    <property type="match status" value="1"/>
</dbReference>